<comment type="similarity">
    <text evidence="1">Belongs to the UPF0225 family.</text>
</comment>
<keyword id="KW-1185">Reference proteome</keyword>
<gene>
    <name type="ordered locus">Pnap_0466</name>
</gene>
<organism>
    <name type="scientific">Polaromonas naphthalenivorans (strain CJ2)</name>
    <dbReference type="NCBI Taxonomy" id="365044"/>
    <lineage>
        <taxon>Bacteria</taxon>
        <taxon>Pseudomonadati</taxon>
        <taxon>Pseudomonadota</taxon>
        <taxon>Betaproteobacteria</taxon>
        <taxon>Burkholderiales</taxon>
        <taxon>Comamonadaceae</taxon>
        <taxon>Polaromonas</taxon>
    </lineage>
</organism>
<sequence length="136" mass="15299">MTTPCPCGRTSANSAKPAKTQPLPFFACCGPYLNESVPAPDAHALMRSRYSAFVLQRADYLLATWHASTRPAALDFAPGAKWLGLDVRSHRVLDADHAEVEFVARCREAGRATRLHERSRFVRESERWFYVDGDQF</sequence>
<evidence type="ECO:0000255" key="1">
    <source>
        <dbReference type="HAMAP-Rule" id="MF_00612"/>
    </source>
</evidence>
<name>Y466_POLNA</name>
<dbReference type="EMBL" id="CP000529">
    <property type="protein sequence ID" value="ABM35788.1"/>
    <property type="molecule type" value="Genomic_DNA"/>
</dbReference>
<dbReference type="RefSeq" id="WP_011799888.1">
    <property type="nucleotide sequence ID" value="NC_008781.1"/>
</dbReference>
<dbReference type="SMR" id="A1VJG0"/>
<dbReference type="STRING" id="365044.Pnap_0466"/>
<dbReference type="KEGG" id="pna:Pnap_0466"/>
<dbReference type="eggNOG" id="COG3012">
    <property type="taxonomic scope" value="Bacteria"/>
</dbReference>
<dbReference type="HOGENOM" id="CLU_099590_2_0_4"/>
<dbReference type="OrthoDB" id="21421at2"/>
<dbReference type="Proteomes" id="UP000000644">
    <property type="component" value="Chromosome"/>
</dbReference>
<dbReference type="Gene3D" id="3.10.450.50">
    <property type="match status" value="1"/>
</dbReference>
<dbReference type="HAMAP" id="MF_00612">
    <property type="entry name" value="UPF0225"/>
    <property type="match status" value="1"/>
</dbReference>
<dbReference type="InterPro" id="IPR032710">
    <property type="entry name" value="NTF2-like_dom_sf"/>
</dbReference>
<dbReference type="InterPro" id="IPR023006">
    <property type="entry name" value="UPF0225"/>
</dbReference>
<dbReference type="InterPro" id="IPR048469">
    <property type="entry name" value="YchJ-like_M"/>
</dbReference>
<dbReference type="Pfam" id="PF17775">
    <property type="entry name" value="YchJ_M-like"/>
    <property type="match status" value="1"/>
</dbReference>
<dbReference type="SUPFAM" id="SSF54427">
    <property type="entry name" value="NTF2-like"/>
    <property type="match status" value="1"/>
</dbReference>
<accession>A1VJG0</accession>
<feature type="chain" id="PRO_1000056729" description="UPF0225 protein Pnap_0466">
    <location>
        <begin position="1"/>
        <end position="136"/>
    </location>
</feature>
<protein>
    <recommendedName>
        <fullName evidence="1">UPF0225 protein Pnap_0466</fullName>
    </recommendedName>
</protein>
<proteinExistence type="inferred from homology"/>
<reference key="1">
    <citation type="journal article" date="2009" name="Environ. Microbiol.">
        <title>The genome of Polaromonas naphthalenivorans strain CJ2, isolated from coal tar-contaminated sediment, reveals physiological and metabolic versatility and evolution through extensive horizontal gene transfer.</title>
        <authorList>
            <person name="Yagi J.M."/>
            <person name="Sims D."/>
            <person name="Brettin T."/>
            <person name="Bruce D."/>
            <person name="Madsen E.L."/>
        </authorList>
    </citation>
    <scope>NUCLEOTIDE SEQUENCE [LARGE SCALE GENOMIC DNA]</scope>
    <source>
        <strain>CJ2</strain>
    </source>
</reference>